<accession>A6USC8</accession>
<protein>
    <recommendedName>
        <fullName evidence="1">2-amino-3,7-dideoxy-D-threo-hept-6-ulosonate synthase</fullName>
        <shortName evidence="1">ADH synthase</shortName>
        <shortName evidence="1">ADHS</shortName>
        <shortName evidence="1">ADTH synthase</shortName>
        <ecNumber evidence="1">2.2.1.10</ecNumber>
    </recommendedName>
</protein>
<keyword id="KW-0028">Amino-acid biosynthesis</keyword>
<keyword id="KW-0057">Aromatic amino acid biosynthesis</keyword>
<keyword id="KW-0704">Schiff base</keyword>
<keyword id="KW-0808">Transferase</keyword>
<reference key="1">
    <citation type="submission" date="2007-06" db="EMBL/GenBank/DDBJ databases">
        <title>Complete sequence of Methanococcus vannielii SB.</title>
        <authorList>
            <consortium name="US DOE Joint Genome Institute"/>
            <person name="Copeland A."/>
            <person name="Lucas S."/>
            <person name="Lapidus A."/>
            <person name="Barry K."/>
            <person name="Glavina del Rio T."/>
            <person name="Dalin E."/>
            <person name="Tice H."/>
            <person name="Pitluck S."/>
            <person name="Chain P."/>
            <person name="Malfatti S."/>
            <person name="Shin M."/>
            <person name="Vergez L."/>
            <person name="Schmutz J."/>
            <person name="Larimer F."/>
            <person name="Land M."/>
            <person name="Hauser L."/>
            <person name="Kyrpides N."/>
            <person name="Anderson I."/>
            <person name="Sieprawska-Lupa M."/>
            <person name="Whitman W.B."/>
            <person name="Richardson P."/>
        </authorList>
    </citation>
    <scope>NUCLEOTIDE SEQUENCE [LARGE SCALE GENOMIC DNA]</scope>
    <source>
        <strain>ATCC 35089 / DSM 1224 / JCM 13029 / OCM 148 / SB</strain>
    </source>
</reference>
<evidence type="ECO:0000255" key="1">
    <source>
        <dbReference type="HAMAP-Rule" id="MF_00960"/>
    </source>
</evidence>
<gene>
    <name evidence="1" type="primary">aroA'</name>
    <name type="ordered locus">Mevan_1506</name>
</gene>
<feature type="chain" id="PRO_0000363666" description="2-amino-3,7-dideoxy-D-threo-hept-6-ulosonate synthase">
    <location>
        <begin position="1"/>
        <end position="272"/>
    </location>
</feature>
<feature type="active site" description="Proton acceptor" evidence="1">
    <location>
        <position position="33"/>
    </location>
</feature>
<feature type="active site" description="Proton donor" evidence="1">
    <location>
        <position position="153"/>
    </location>
</feature>
<feature type="active site" description="Schiff-base intermediate with substrate" evidence="1">
    <location>
        <position position="184"/>
    </location>
</feature>
<feature type="binding site" evidence="1">
    <location>
        <begin position="33"/>
        <end position="37"/>
    </location>
    <ligand>
        <name>1-deoxy-D-threo-hexo-2,5-diulose 6-phosphate</name>
        <dbReference type="ChEBI" id="CHEBI:58861"/>
    </ligand>
</feature>
<feature type="binding site" evidence="1">
    <location>
        <begin position="153"/>
        <end position="155"/>
    </location>
    <ligand>
        <name>1-deoxy-D-threo-hexo-2,5-diulose 6-phosphate</name>
        <dbReference type="ChEBI" id="CHEBI:58861"/>
    </ligand>
</feature>
<feature type="binding site" evidence="1">
    <location>
        <begin position="209"/>
        <end position="210"/>
    </location>
    <ligand>
        <name>1-deoxy-D-threo-hexo-2,5-diulose 6-phosphate</name>
        <dbReference type="ChEBI" id="CHEBI:58861"/>
    </ligand>
</feature>
<feature type="binding site" evidence="1">
    <location>
        <begin position="237"/>
        <end position="238"/>
    </location>
    <ligand>
        <name>1-deoxy-D-threo-hexo-2,5-diulose 6-phosphate</name>
        <dbReference type="ChEBI" id="CHEBI:58861"/>
    </ligand>
</feature>
<organism>
    <name type="scientific">Methanococcus vannielii (strain ATCC 35089 / DSM 1224 / JCM 13029 / OCM 148 / SB)</name>
    <dbReference type="NCBI Taxonomy" id="406327"/>
    <lineage>
        <taxon>Archaea</taxon>
        <taxon>Methanobacteriati</taxon>
        <taxon>Methanobacteriota</taxon>
        <taxon>Methanomada group</taxon>
        <taxon>Methanococci</taxon>
        <taxon>Methanococcales</taxon>
        <taxon>Methanococcaceae</taxon>
        <taxon>Methanococcus</taxon>
    </lineage>
</organism>
<proteinExistence type="inferred from homology"/>
<comment type="function">
    <text evidence="1">Catalyzes a transaldol reaction between 6-deoxy-5-ketofructose 1-phosphate (DKFP) and L-aspartate semialdehyde (ASA) with an elimination of hydroxypyruvaldehyde phosphate to yield 2-amino-3,7-dideoxy-D-threo-hept-6-ulosonate (ADH). Plays a key role in an alternative pathway of the biosynthesis of 3-dehydroquinate (DHQ), which is involved in the canonical pathway for the biosynthesis of aromatic amino acids.</text>
</comment>
<comment type="catalytic activity">
    <reaction evidence="1">
        <text>1-deoxy-D-threo-hexo-2,5-diulose 6-phosphate + L-aspartate 4-semialdehyde = 2,3-dioxopropyl phosphate + 2-amino-2,3,7-trideoxy-D-lyxo-hept-6-ulosonate</text>
        <dbReference type="Rhea" id="RHEA:25952"/>
        <dbReference type="ChEBI" id="CHEBI:58859"/>
        <dbReference type="ChEBI" id="CHEBI:58860"/>
        <dbReference type="ChEBI" id="CHEBI:58861"/>
        <dbReference type="ChEBI" id="CHEBI:537519"/>
        <dbReference type="EC" id="2.2.1.10"/>
    </reaction>
</comment>
<comment type="subunit">
    <text evidence="1">Homodecamer.</text>
</comment>
<comment type="similarity">
    <text evidence="1">Belongs to the DeoC/FbaB aldolase family. ADHS subfamily.</text>
</comment>
<name>ADHS_METVS</name>
<sequence>MKMFDNIKNVGKLIRLERIFDKKSEKTVIIPMDHGVSSGPLEGIKDMRIATNAVADGGANAVLGHKGLVRHGHRGYGRDIGLIVHMSAGTSISPDPNKKVIVTTVEDALRMGADAVSLHVNVGAETDFEMYRDLGLISETCEYWGMPLIAMMYPRGPKIKDERDPEVVAHAARLGAELGADIIKTNYTGDIDSFKDVVKGCPAPIVIAGGPKTNTDEEFLQMVKDAMHAGSAGVASGRNVFQHKDVRGITSAICKIVHEDVEVKEALNEIKI</sequence>
<dbReference type="EC" id="2.2.1.10" evidence="1"/>
<dbReference type="EMBL" id="CP000742">
    <property type="protein sequence ID" value="ABR55400.1"/>
    <property type="molecule type" value="Genomic_DNA"/>
</dbReference>
<dbReference type="RefSeq" id="WP_012066314.1">
    <property type="nucleotide sequence ID" value="NC_009634.1"/>
</dbReference>
<dbReference type="SMR" id="A6USC8"/>
<dbReference type="STRING" id="406327.Mevan_1506"/>
<dbReference type="GeneID" id="5324658"/>
<dbReference type="KEGG" id="mvn:Mevan_1506"/>
<dbReference type="eggNOG" id="arCOG04044">
    <property type="taxonomic scope" value="Archaea"/>
</dbReference>
<dbReference type="HOGENOM" id="CLU_057069_2_0_2"/>
<dbReference type="OrthoDB" id="50091at2157"/>
<dbReference type="Proteomes" id="UP000001107">
    <property type="component" value="Chromosome"/>
</dbReference>
<dbReference type="GO" id="GO:0004332">
    <property type="term" value="F:fructose-bisphosphate aldolase activity"/>
    <property type="evidence" value="ECO:0007669"/>
    <property type="project" value="InterPro"/>
</dbReference>
<dbReference type="GO" id="GO:0016836">
    <property type="term" value="F:hydro-lyase activity"/>
    <property type="evidence" value="ECO:0007669"/>
    <property type="project" value="InterPro"/>
</dbReference>
<dbReference type="GO" id="GO:0016744">
    <property type="term" value="F:transketolase or transaldolase activity"/>
    <property type="evidence" value="ECO:0007669"/>
    <property type="project" value="UniProtKB-UniRule"/>
</dbReference>
<dbReference type="GO" id="GO:0008652">
    <property type="term" value="P:amino acid biosynthetic process"/>
    <property type="evidence" value="ECO:0007669"/>
    <property type="project" value="UniProtKB-KW"/>
</dbReference>
<dbReference type="GO" id="GO:0009073">
    <property type="term" value="P:aromatic amino acid family biosynthetic process"/>
    <property type="evidence" value="ECO:0007669"/>
    <property type="project" value="UniProtKB-UniRule"/>
</dbReference>
<dbReference type="CDD" id="cd00958">
    <property type="entry name" value="DhnA"/>
    <property type="match status" value="1"/>
</dbReference>
<dbReference type="Gene3D" id="3.20.20.70">
    <property type="entry name" value="Aldolase class I"/>
    <property type="match status" value="1"/>
</dbReference>
<dbReference type="HAMAP" id="MF_00960">
    <property type="entry name" value="ADH_synthase"/>
    <property type="match status" value="1"/>
</dbReference>
<dbReference type="InterPro" id="IPR010210">
    <property type="entry name" value="ADH_synthase"/>
</dbReference>
<dbReference type="InterPro" id="IPR013785">
    <property type="entry name" value="Aldolase_TIM"/>
</dbReference>
<dbReference type="InterPro" id="IPR002915">
    <property type="entry name" value="DeoC/FbaB/LacD_aldolase"/>
</dbReference>
<dbReference type="InterPro" id="IPR050456">
    <property type="entry name" value="DeoC/FbaB_aldolase"/>
</dbReference>
<dbReference type="InterPro" id="IPR041720">
    <property type="entry name" value="FbaB-like"/>
</dbReference>
<dbReference type="NCBIfam" id="TIGR01949">
    <property type="entry name" value="ADH_synth"/>
    <property type="match status" value="1"/>
</dbReference>
<dbReference type="NCBIfam" id="NF005556">
    <property type="entry name" value="PRK07226.1"/>
    <property type="match status" value="1"/>
</dbReference>
<dbReference type="PANTHER" id="PTHR47916:SF1">
    <property type="entry name" value="3-HYDROXY-5-PHOSPHONOOXYPENTANE-2,4-DIONE THIOLASE"/>
    <property type="match status" value="1"/>
</dbReference>
<dbReference type="PANTHER" id="PTHR47916">
    <property type="entry name" value="FRUCTOSE-BISPHOSPHATE ALDOLASE CLASS 1"/>
    <property type="match status" value="1"/>
</dbReference>
<dbReference type="Pfam" id="PF01791">
    <property type="entry name" value="DeoC"/>
    <property type="match status" value="1"/>
</dbReference>
<dbReference type="PIRSF" id="PIRSF038992">
    <property type="entry name" value="Aldolase_Ia"/>
    <property type="match status" value="1"/>
</dbReference>
<dbReference type="SMART" id="SM01133">
    <property type="entry name" value="DeoC"/>
    <property type="match status" value="1"/>
</dbReference>
<dbReference type="SUPFAM" id="SSF51569">
    <property type="entry name" value="Aldolase"/>
    <property type="match status" value="1"/>
</dbReference>